<reference key="1">
    <citation type="journal article" date="2008" name="Genome Biol.">
        <title>A genomic analysis of the archaeal system Ignicoccus hospitalis-Nanoarchaeum equitans.</title>
        <authorList>
            <person name="Podar M."/>
            <person name="Anderson I."/>
            <person name="Makarova K.S."/>
            <person name="Elkins J.G."/>
            <person name="Ivanova N."/>
            <person name="Wall M.A."/>
            <person name="Lykidis A."/>
            <person name="Mavromatis K."/>
            <person name="Sun H."/>
            <person name="Hudson M.E."/>
            <person name="Chen W."/>
            <person name="Deciu C."/>
            <person name="Hutchison D."/>
            <person name="Eads J.R."/>
            <person name="Anderson A."/>
            <person name="Fernandes F."/>
            <person name="Szeto E."/>
            <person name="Lapidus A."/>
            <person name="Kyrpides N.C."/>
            <person name="Saier M.H. Jr."/>
            <person name="Richardson P.M."/>
            <person name="Rachel R."/>
            <person name="Huber H."/>
            <person name="Eisen J.A."/>
            <person name="Koonin E.V."/>
            <person name="Keller M."/>
            <person name="Stetter K.O."/>
        </authorList>
    </citation>
    <scope>NUCLEOTIDE SEQUENCE [LARGE SCALE GENOMIC DNA]</scope>
    <source>
        <strain>KIN4/I / DSM 18386 / JCM 14125</strain>
    </source>
</reference>
<feature type="chain" id="PRO_0000318539" description="Replication factor C large subunit">
    <location>
        <begin position="1"/>
        <end position="476"/>
    </location>
</feature>
<feature type="region of interest" description="Disordered" evidence="2">
    <location>
        <begin position="447"/>
        <end position="476"/>
    </location>
</feature>
<feature type="compositionally biased region" description="Basic residues" evidence="2">
    <location>
        <begin position="452"/>
        <end position="461"/>
    </location>
</feature>
<feature type="binding site" evidence="1">
    <location>
        <begin position="50"/>
        <end position="57"/>
    </location>
    <ligand>
        <name>ATP</name>
        <dbReference type="ChEBI" id="CHEBI:30616"/>
    </ligand>
</feature>
<dbReference type="EMBL" id="CP000816">
    <property type="protein sequence ID" value="ABU82476.1"/>
    <property type="molecule type" value="Genomic_DNA"/>
</dbReference>
<dbReference type="RefSeq" id="WP_012123440.1">
    <property type="nucleotide sequence ID" value="NC_009776.1"/>
</dbReference>
<dbReference type="SMR" id="A8AC24"/>
<dbReference type="STRING" id="453591.Igni_1300"/>
<dbReference type="GeneID" id="5562218"/>
<dbReference type="KEGG" id="iho:Igni_1300"/>
<dbReference type="eggNOG" id="arCOG00470">
    <property type="taxonomic scope" value="Archaea"/>
</dbReference>
<dbReference type="HOGENOM" id="CLU_027255_1_1_2"/>
<dbReference type="OrthoDB" id="8658at2157"/>
<dbReference type="PhylomeDB" id="A8AC24"/>
<dbReference type="Proteomes" id="UP000000262">
    <property type="component" value="Chromosome"/>
</dbReference>
<dbReference type="GO" id="GO:0005663">
    <property type="term" value="C:DNA replication factor C complex"/>
    <property type="evidence" value="ECO:0007669"/>
    <property type="project" value="InterPro"/>
</dbReference>
<dbReference type="GO" id="GO:0005524">
    <property type="term" value="F:ATP binding"/>
    <property type="evidence" value="ECO:0007669"/>
    <property type="project" value="UniProtKB-UniRule"/>
</dbReference>
<dbReference type="GO" id="GO:0016887">
    <property type="term" value="F:ATP hydrolysis activity"/>
    <property type="evidence" value="ECO:0007669"/>
    <property type="project" value="InterPro"/>
</dbReference>
<dbReference type="GO" id="GO:0003689">
    <property type="term" value="F:DNA clamp loader activity"/>
    <property type="evidence" value="ECO:0007669"/>
    <property type="project" value="UniProtKB-UniRule"/>
</dbReference>
<dbReference type="GO" id="GO:0006260">
    <property type="term" value="P:DNA replication"/>
    <property type="evidence" value="ECO:0007669"/>
    <property type="project" value="UniProtKB-UniRule"/>
</dbReference>
<dbReference type="CDD" id="cd00009">
    <property type="entry name" value="AAA"/>
    <property type="match status" value="1"/>
</dbReference>
<dbReference type="CDD" id="cd18140">
    <property type="entry name" value="HLD_clamp_RFC"/>
    <property type="match status" value="1"/>
</dbReference>
<dbReference type="Gene3D" id="1.10.8.60">
    <property type="match status" value="1"/>
</dbReference>
<dbReference type="Gene3D" id="3.40.50.300">
    <property type="entry name" value="P-loop containing nucleotide triphosphate hydrolases"/>
    <property type="match status" value="1"/>
</dbReference>
<dbReference type="HAMAP" id="MF_01508">
    <property type="entry name" value="RfcL"/>
    <property type="match status" value="1"/>
</dbReference>
<dbReference type="InterPro" id="IPR003593">
    <property type="entry name" value="AAA+_ATPase"/>
</dbReference>
<dbReference type="InterPro" id="IPR003959">
    <property type="entry name" value="ATPase_AAA_core"/>
</dbReference>
<dbReference type="InterPro" id="IPR013725">
    <property type="entry name" value="DNA_replication_fac_RFC1_C"/>
</dbReference>
<dbReference type="InterPro" id="IPR027417">
    <property type="entry name" value="P-loop_NTPase"/>
</dbReference>
<dbReference type="InterPro" id="IPR023935">
    <property type="entry name" value="Rep_factor-C_lsu"/>
</dbReference>
<dbReference type="InterPro" id="IPR047854">
    <property type="entry name" value="RFC_lid"/>
</dbReference>
<dbReference type="NCBIfam" id="NF003229">
    <property type="entry name" value="PRK04195.1-5"/>
    <property type="match status" value="1"/>
</dbReference>
<dbReference type="PANTHER" id="PTHR23389">
    <property type="entry name" value="CHROMOSOME TRANSMISSION FIDELITY FACTOR 18"/>
    <property type="match status" value="1"/>
</dbReference>
<dbReference type="PANTHER" id="PTHR23389:SF6">
    <property type="entry name" value="REPLICATION FACTOR C SUBUNIT 1"/>
    <property type="match status" value="1"/>
</dbReference>
<dbReference type="Pfam" id="PF00004">
    <property type="entry name" value="AAA"/>
    <property type="match status" value="1"/>
</dbReference>
<dbReference type="Pfam" id="PF08519">
    <property type="entry name" value="RFC1"/>
    <property type="match status" value="1"/>
</dbReference>
<dbReference type="SMART" id="SM00382">
    <property type="entry name" value="AAA"/>
    <property type="match status" value="1"/>
</dbReference>
<dbReference type="SUPFAM" id="SSF52540">
    <property type="entry name" value="P-loop containing nucleoside triphosphate hydrolases"/>
    <property type="match status" value="1"/>
</dbReference>
<sequence length="476" mass="54711">MSAVPWIIKYRPKRVEDVIDQEKAKEVLIPWIKKWLSGTPPEKRAALLWGPPGVGKTSLVEAICNEFNLEKIEMNASDFRRKGDIERVAIAAATKKPLPPWKGRLILLDEVDGLSPRGDEGAVAAILELIKKTKNPIVMTANDPWGTHLRPIREESLLVEFKRIPKTKAREFLLKICEKEGVYCEKEAVDYIIEKNKGDLRASINDLQSIAEAYGKVTLDLASALLVERDRVLTPWEMLQSLFYSKYSWQARKAVTSTDLDYDTLFLWIAENVPKQYGDDPYDLWRGMEAVSRADVIYGRIRRTMNWSLLPYFFNALGPGVALAKTKYHKRARWSYPEKIVLLARTKEERRVRDELASHLALLTHSSKSYVRREIIPMLQFIAQVNPNYFARLALGLRLSDPMIKYLAKSKYQLVKKYVEELKSSRTVKAEEQTKAKEVVKELKKEYEKGTKKGKGEKRRKGSDEGSGLLKWLKKD</sequence>
<evidence type="ECO:0000255" key="1">
    <source>
        <dbReference type="HAMAP-Rule" id="MF_01508"/>
    </source>
</evidence>
<evidence type="ECO:0000256" key="2">
    <source>
        <dbReference type="SAM" id="MobiDB-lite"/>
    </source>
</evidence>
<proteinExistence type="inferred from homology"/>
<name>RFCL_IGNH4</name>
<gene>
    <name evidence="1" type="primary">rfcL</name>
    <name type="ordered locus">Igni_1300</name>
</gene>
<comment type="function">
    <text evidence="1">Part of the RFC clamp loader complex which loads the PCNA sliding clamp onto DNA.</text>
</comment>
<comment type="subunit">
    <text evidence="1">Heteromultimer composed of small subunits (RfcS) and large subunits (RfcL).</text>
</comment>
<comment type="similarity">
    <text evidence="1">Belongs to the activator 1 small subunits family. RfcL subfamily.</text>
</comment>
<organism>
    <name type="scientific">Ignicoccus hospitalis (strain KIN4/I / DSM 18386 / JCM 14125)</name>
    <dbReference type="NCBI Taxonomy" id="453591"/>
    <lineage>
        <taxon>Archaea</taxon>
        <taxon>Thermoproteota</taxon>
        <taxon>Thermoprotei</taxon>
        <taxon>Desulfurococcales</taxon>
        <taxon>Desulfurococcaceae</taxon>
        <taxon>Ignicoccus</taxon>
    </lineage>
</organism>
<protein>
    <recommendedName>
        <fullName evidence="1">Replication factor C large subunit</fullName>
        <shortName evidence="1">RFC large subunit</shortName>
    </recommendedName>
    <alternativeName>
        <fullName evidence="1">Clamp loader large subunit</fullName>
    </alternativeName>
</protein>
<keyword id="KW-0067">ATP-binding</keyword>
<keyword id="KW-0235">DNA replication</keyword>
<keyword id="KW-0547">Nucleotide-binding</keyword>
<keyword id="KW-1185">Reference proteome</keyword>
<accession>A8AC24</accession>